<accession>B7LN38</accession>
<sequence>MFCVQCEQTIRTPAGNGCSYAQGMCGKTAETSDLQDLLIAALQGLSAWAVKAREYGIINHDVDSFAPRAFFSTLTNVNFDSPRIVGYAREAIALREALKAQCLAVDANARVDNPMADLQLVSDDPGELQRQAAEFTPNKDKAAIGENILGLRLLCLYGLKGAAAYMEHAHVLGQYDNDIYAQYHKIMAWLGTWPADMNALLECSMEIGQMNFKVMSILDAGETGKYGHPTPTQVNVKATAGKCILISGHDLKDLYNLLEQTEGTGVNVYTHGEMLPAHGYPELRKFKHLVGNYGSGWQNQQVEFARFPGPIVMTSNCIIDPTVGAYDDRIWTRSIVGWPGVRHLDGDDFSAVIAQAQQMAGFPYSEIPHLITVGFGRQTLLDAADTLIDLVSREKLRHIFLLGGCDGARGERHYFTDFATSVPDDCLILTLACGKYRFNKLEFGDIEGLPRLVDAGQCNDAYSAIILAVTLAEKLGCGVNDLPLSLVLSWFEQKAIVILLTLLSLGVKNIVTGPTAPGFLTPDLLAVLNEKFGLRSITTVEEDMKQLLSA</sequence>
<comment type="function">
    <text evidence="1">Catalyzes the reduction of hydroxylamine to form NH(3) and H(2)O.</text>
</comment>
<comment type="catalytic activity">
    <reaction evidence="1">
        <text>A + NH4(+) + H2O = hydroxylamine + AH2 + H(+)</text>
        <dbReference type="Rhea" id="RHEA:22052"/>
        <dbReference type="ChEBI" id="CHEBI:13193"/>
        <dbReference type="ChEBI" id="CHEBI:15377"/>
        <dbReference type="ChEBI" id="CHEBI:15378"/>
        <dbReference type="ChEBI" id="CHEBI:15429"/>
        <dbReference type="ChEBI" id="CHEBI:17499"/>
        <dbReference type="ChEBI" id="CHEBI:28938"/>
        <dbReference type="EC" id="1.7.99.1"/>
    </reaction>
</comment>
<comment type="cofactor">
    <cofactor evidence="1">
        <name>[2Fe-2S] cluster</name>
        <dbReference type="ChEBI" id="CHEBI:190135"/>
    </cofactor>
    <text evidence="1">Binds 1 [2Fe-2S] cluster.</text>
</comment>
<comment type="cofactor">
    <cofactor evidence="1">
        <name>hybrid [4Fe-2O-2S] cluster</name>
        <dbReference type="ChEBI" id="CHEBI:60519"/>
    </cofactor>
    <text evidence="1">Binds 1 hybrid [4Fe-2O-2S] cluster.</text>
</comment>
<comment type="subcellular location">
    <subcellularLocation>
        <location evidence="1">Cytoplasm</location>
    </subcellularLocation>
</comment>
<comment type="similarity">
    <text evidence="1">Belongs to the HCP family.</text>
</comment>
<organism>
    <name type="scientific">Escherichia fergusonii (strain ATCC 35469 / DSM 13698 / CCUG 18766 / IAM 14443 / JCM 21226 / LMG 7866 / NBRC 102419 / NCTC 12128 / CDC 0568-73)</name>
    <dbReference type="NCBI Taxonomy" id="585054"/>
    <lineage>
        <taxon>Bacteria</taxon>
        <taxon>Pseudomonadati</taxon>
        <taxon>Pseudomonadota</taxon>
        <taxon>Gammaproteobacteria</taxon>
        <taxon>Enterobacterales</taxon>
        <taxon>Enterobacteriaceae</taxon>
        <taxon>Escherichia</taxon>
    </lineage>
</organism>
<protein>
    <recommendedName>
        <fullName evidence="1">Hydroxylamine reductase</fullName>
        <ecNumber evidence="1">1.7.99.1</ecNumber>
    </recommendedName>
    <alternativeName>
        <fullName evidence="1">Hybrid-cluster protein</fullName>
        <shortName evidence="1">HCP</shortName>
    </alternativeName>
    <alternativeName>
        <fullName evidence="1">Prismane protein</fullName>
    </alternativeName>
</protein>
<feature type="chain" id="PRO_1000192561" description="Hydroxylamine reductase">
    <location>
        <begin position="1"/>
        <end position="550"/>
    </location>
</feature>
<feature type="binding site" evidence="1">
    <location>
        <position position="3"/>
    </location>
    <ligand>
        <name>[2Fe-2S] cluster</name>
        <dbReference type="ChEBI" id="CHEBI:190135"/>
    </ligand>
</feature>
<feature type="binding site" evidence="1">
    <location>
        <position position="6"/>
    </location>
    <ligand>
        <name>[2Fe-2S] cluster</name>
        <dbReference type="ChEBI" id="CHEBI:190135"/>
    </ligand>
</feature>
<feature type="binding site" evidence="1">
    <location>
        <position position="18"/>
    </location>
    <ligand>
        <name>[2Fe-2S] cluster</name>
        <dbReference type="ChEBI" id="CHEBI:190135"/>
    </ligand>
</feature>
<feature type="binding site" evidence="1">
    <location>
        <position position="25"/>
    </location>
    <ligand>
        <name>[2Fe-2S] cluster</name>
        <dbReference type="ChEBI" id="CHEBI:190135"/>
    </ligand>
</feature>
<feature type="binding site" evidence="1">
    <location>
        <position position="249"/>
    </location>
    <ligand>
        <name>hybrid [4Fe-2O-2S] cluster</name>
        <dbReference type="ChEBI" id="CHEBI:60519"/>
    </ligand>
</feature>
<feature type="binding site" evidence="1">
    <location>
        <position position="273"/>
    </location>
    <ligand>
        <name>hybrid [4Fe-2O-2S] cluster</name>
        <dbReference type="ChEBI" id="CHEBI:60519"/>
    </ligand>
</feature>
<feature type="binding site" evidence="1">
    <location>
        <position position="317"/>
    </location>
    <ligand>
        <name>hybrid [4Fe-2O-2S] cluster</name>
        <dbReference type="ChEBI" id="CHEBI:60519"/>
    </ligand>
</feature>
<feature type="binding site" description="via persulfide group" evidence="1">
    <location>
        <position position="405"/>
    </location>
    <ligand>
        <name>hybrid [4Fe-2O-2S] cluster</name>
        <dbReference type="ChEBI" id="CHEBI:60519"/>
    </ligand>
</feature>
<feature type="binding site" evidence="1">
    <location>
        <position position="433"/>
    </location>
    <ligand>
        <name>hybrid [4Fe-2O-2S] cluster</name>
        <dbReference type="ChEBI" id="CHEBI:60519"/>
    </ligand>
</feature>
<feature type="binding site" evidence="1">
    <location>
        <position position="458"/>
    </location>
    <ligand>
        <name>hybrid [4Fe-2O-2S] cluster</name>
        <dbReference type="ChEBI" id="CHEBI:60519"/>
    </ligand>
</feature>
<feature type="binding site" evidence="1">
    <location>
        <position position="492"/>
    </location>
    <ligand>
        <name>hybrid [4Fe-2O-2S] cluster</name>
        <dbReference type="ChEBI" id="CHEBI:60519"/>
    </ligand>
</feature>
<feature type="binding site" evidence="1">
    <location>
        <position position="494"/>
    </location>
    <ligand>
        <name>hybrid [4Fe-2O-2S] cluster</name>
        <dbReference type="ChEBI" id="CHEBI:60519"/>
    </ligand>
</feature>
<feature type="modified residue" description="Cysteine persulfide" evidence="1">
    <location>
        <position position="405"/>
    </location>
</feature>
<gene>
    <name evidence="1" type="primary">hcp</name>
    <name type="ordered locus">EFER_1018</name>
</gene>
<reference key="1">
    <citation type="journal article" date="2009" name="PLoS Genet.">
        <title>Organised genome dynamics in the Escherichia coli species results in highly diverse adaptive paths.</title>
        <authorList>
            <person name="Touchon M."/>
            <person name="Hoede C."/>
            <person name="Tenaillon O."/>
            <person name="Barbe V."/>
            <person name="Baeriswyl S."/>
            <person name="Bidet P."/>
            <person name="Bingen E."/>
            <person name="Bonacorsi S."/>
            <person name="Bouchier C."/>
            <person name="Bouvet O."/>
            <person name="Calteau A."/>
            <person name="Chiapello H."/>
            <person name="Clermont O."/>
            <person name="Cruveiller S."/>
            <person name="Danchin A."/>
            <person name="Diard M."/>
            <person name="Dossat C."/>
            <person name="Karoui M.E."/>
            <person name="Frapy E."/>
            <person name="Garry L."/>
            <person name="Ghigo J.M."/>
            <person name="Gilles A.M."/>
            <person name="Johnson J."/>
            <person name="Le Bouguenec C."/>
            <person name="Lescat M."/>
            <person name="Mangenot S."/>
            <person name="Martinez-Jehanne V."/>
            <person name="Matic I."/>
            <person name="Nassif X."/>
            <person name="Oztas S."/>
            <person name="Petit M.A."/>
            <person name="Pichon C."/>
            <person name="Rouy Z."/>
            <person name="Ruf C.S."/>
            <person name="Schneider D."/>
            <person name="Tourret J."/>
            <person name="Vacherie B."/>
            <person name="Vallenet D."/>
            <person name="Medigue C."/>
            <person name="Rocha E.P.C."/>
            <person name="Denamur E."/>
        </authorList>
    </citation>
    <scope>NUCLEOTIDE SEQUENCE [LARGE SCALE GENOMIC DNA]</scope>
    <source>
        <strain>ATCC 35469 / DSM 13698 / BCRC 15582 / CCUG 18766 / IAM 14443 / JCM 21226 / LMG 7866 / NBRC 102419 / NCTC 12128 / CDC 0568-73</strain>
    </source>
</reference>
<name>HCP_ESCF3</name>
<proteinExistence type="inferred from homology"/>
<keyword id="KW-0001">2Fe-2S</keyword>
<keyword id="KW-0963">Cytoplasm</keyword>
<keyword id="KW-0408">Iron</keyword>
<keyword id="KW-0411">Iron-sulfur</keyword>
<keyword id="KW-0479">Metal-binding</keyword>
<keyword id="KW-0560">Oxidoreductase</keyword>
<dbReference type="EC" id="1.7.99.1" evidence="1"/>
<dbReference type="EMBL" id="CU928158">
    <property type="protein sequence ID" value="CAQ88549.1"/>
    <property type="molecule type" value="Genomic_DNA"/>
</dbReference>
<dbReference type="RefSeq" id="WP_000458828.1">
    <property type="nucleotide sequence ID" value="NC_011740.1"/>
</dbReference>
<dbReference type="SMR" id="B7LN38"/>
<dbReference type="GeneID" id="75057929"/>
<dbReference type="KEGG" id="efe:EFER_1018"/>
<dbReference type="HOGENOM" id="CLU_038344_2_0_6"/>
<dbReference type="OrthoDB" id="9761526at2"/>
<dbReference type="Proteomes" id="UP000000745">
    <property type="component" value="Chromosome"/>
</dbReference>
<dbReference type="GO" id="GO:0005737">
    <property type="term" value="C:cytoplasm"/>
    <property type="evidence" value="ECO:0007669"/>
    <property type="project" value="UniProtKB-SubCell"/>
</dbReference>
<dbReference type="GO" id="GO:0051537">
    <property type="term" value="F:2 iron, 2 sulfur cluster binding"/>
    <property type="evidence" value="ECO:0007669"/>
    <property type="project" value="UniProtKB-KW"/>
</dbReference>
<dbReference type="GO" id="GO:0050418">
    <property type="term" value="F:hydroxylamine reductase activity"/>
    <property type="evidence" value="ECO:0007669"/>
    <property type="project" value="UniProtKB-UniRule"/>
</dbReference>
<dbReference type="GO" id="GO:0046872">
    <property type="term" value="F:metal ion binding"/>
    <property type="evidence" value="ECO:0007669"/>
    <property type="project" value="UniProtKB-KW"/>
</dbReference>
<dbReference type="GO" id="GO:0004601">
    <property type="term" value="F:peroxidase activity"/>
    <property type="evidence" value="ECO:0007669"/>
    <property type="project" value="TreeGrafter"/>
</dbReference>
<dbReference type="GO" id="GO:0042542">
    <property type="term" value="P:response to hydrogen peroxide"/>
    <property type="evidence" value="ECO:0007669"/>
    <property type="project" value="TreeGrafter"/>
</dbReference>
<dbReference type="CDD" id="cd01914">
    <property type="entry name" value="HCP"/>
    <property type="match status" value="1"/>
</dbReference>
<dbReference type="FunFam" id="1.20.1270.20:FF:000001">
    <property type="entry name" value="Hydroxylamine reductase"/>
    <property type="match status" value="1"/>
</dbReference>
<dbReference type="FunFam" id="1.20.1270.20:FF:000002">
    <property type="entry name" value="Hydroxylamine reductase"/>
    <property type="match status" value="1"/>
</dbReference>
<dbReference type="FunFam" id="3.40.50.2030:FF:000001">
    <property type="entry name" value="Hydroxylamine reductase"/>
    <property type="match status" value="1"/>
</dbReference>
<dbReference type="FunFam" id="3.40.50.2030:FF:000002">
    <property type="entry name" value="Hydroxylamine reductase"/>
    <property type="match status" value="1"/>
</dbReference>
<dbReference type="Gene3D" id="1.20.1270.20">
    <property type="match status" value="2"/>
</dbReference>
<dbReference type="Gene3D" id="3.40.50.2030">
    <property type="match status" value="2"/>
</dbReference>
<dbReference type="HAMAP" id="MF_00069">
    <property type="entry name" value="Hydroxylam_reduct"/>
    <property type="match status" value="1"/>
</dbReference>
<dbReference type="InterPro" id="IPR004137">
    <property type="entry name" value="HCP/CODH"/>
</dbReference>
<dbReference type="InterPro" id="IPR010048">
    <property type="entry name" value="Hydroxylam_reduct"/>
</dbReference>
<dbReference type="InterPro" id="IPR016099">
    <property type="entry name" value="Prismane-like_a/b-sand"/>
</dbReference>
<dbReference type="InterPro" id="IPR011254">
    <property type="entry name" value="Prismane-like_sf"/>
</dbReference>
<dbReference type="InterPro" id="IPR016100">
    <property type="entry name" value="Prismane_a-bundle"/>
</dbReference>
<dbReference type="NCBIfam" id="TIGR01703">
    <property type="entry name" value="hybrid_clust"/>
    <property type="match status" value="1"/>
</dbReference>
<dbReference type="NCBIfam" id="NF003658">
    <property type="entry name" value="PRK05290.1"/>
    <property type="match status" value="1"/>
</dbReference>
<dbReference type="PANTHER" id="PTHR30109">
    <property type="entry name" value="HYDROXYLAMINE REDUCTASE"/>
    <property type="match status" value="1"/>
</dbReference>
<dbReference type="PANTHER" id="PTHR30109:SF0">
    <property type="entry name" value="HYDROXYLAMINE REDUCTASE"/>
    <property type="match status" value="1"/>
</dbReference>
<dbReference type="Pfam" id="PF03063">
    <property type="entry name" value="Prismane"/>
    <property type="match status" value="1"/>
</dbReference>
<dbReference type="PIRSF" id="PIRSF000076">
    <property type="entry name" value="HCP"/>
    <property type="match status" value="1"/>
</dbReference>
<dbReference type="SUPFAM" id="SSF56821">
    <property type="entry name" value="Prismane protein-like"/>
    <property type="match status" value="1"/>
</dbReference>
<evidence type="ECO:0000255" key="1">
    <source>
        <dbReference type="HAMAP-Rule" id="MF_00069"/>
    </source>
</evidence>